<feature type="chain" id="PRO_0000298265" description="Protein Syd">
    <location>
        <begin position="1"/>
        <end position="181"/>
    </location>
</feature>
<keyword id="KW-0997">Cell inner membrane</keyword>
<keyword id="KW-1003">Cell membrane</keyword>
<keyword id="KW-0472">Membrane</keyword>
<evidence type="ECO:0000255" key="1">
    <source>
        <dbReference type="HAMAP-Rule" id="MF_01104"/>
    </source>
</evidence>
<accession>Q31XJ7</accession>
<proteinExistence type="inferred from homology"/>
<gene>
    <name evidence="1" type="primary">syd</name>
    <name type="ordered locus">SBO_2674</name>
</gene>
<comment type="function">
    <text evidence="1">Interacts with the SecY protein in vivo. May bind preferentially to an uncomplexed state of SecY, thus functioning either as a chelating agent for excess SecY in the cell or as a regulatory factor that negatively controls the translocase function.</text>
</comment>
<comment type="subcellular location">
    <subcellularLocation>
        <location evidence="1">Cell inner membrane</location>
        <topology evidence="1">Peripheral membrane protein</topology>
        <orientation evidence="1">Cytoplasmic side</orientation>
    </subcellularLocation>
    <text evidence="1">Loosely associated with the cytoplasmic side of the inner membrane, probably via SecY.</text>
</comment>
<comment type="similarity">
    <text evidence="1">Belongs to the Syd family.</text>
</comment>
<protein>
    <recommendedName>
        <fullName evidence="1">Protein Syd</fullName>
    </recommendedName>
</protein>
<organism>
    <name type="scientific">Shigella boydii serotype 4 (strain Sb227)</name>
    <dbReference type="NCBI Taxonomy" id="300268"/>
    <lineage>
        <taxon>Bacteria</taxon>
        <taxon>Pseudomonadati</taxon>
        <taxon>Pseudomonadota</taxon>
        <taxon>Gammaproteobacteria</taxon>
        <taxon>Enterobacterales</taxon>
        <taxon>Enterobacteriaceae</taxon>
        <taxon>Shigella</taxon>
    </lineage>
</organism>
<dbReference type="EMBL" id="CP000036">
    <property type="protein sequence ID" value="ABB67211.1"/>
    <property type="molecule type" value="Genomic_DNA"/>
</dbReference>
<dbReference type="RefSeq" id="WP_000342431.1">
    <property type="nucleotide sequence ID" value="NC_007613.1"/>
</dbReference>
<dbReference type="SMR" id="Q31XJ7"/>
<dbReference type="GeneID" id="93779205"/>
<dbReference type="KEGG" id="sbo:SBO_2674"/>
<dbReference type="HOGENOM" id="CLU_121866_0_0_6"/>
<dbReference type="Proteomes" id="UP000007067">
    <property type="component" value="Chromosome"/>
</dbReference>
<dbReference type="GO" id="GO:0009898">
    <property type="term" value="C:cytoplasmic side of plasma membrane"/>
    <property type="evidence" value="ECO:0007669"/>
    <property type="project" value="InterPro"/>
</dbReference>
<dbReference type="CDD" id="cd16323">
    <property type="entry name" value="Syd"/>
    <property type="match status" value="1"/>
</dbReference>
<dbReference type="FunFam" id="3.40.1580.20:FF:000001">
    <property type="entry name" value="Protein Syd"/>
    <property type="match status" value="1"/>
</dbReference>
<dbReference type="Gene3D" id="3.40.1580.20">
    <property type="entry name" value="Syd protein"/>
    <property type="match status" value="1"/>
</dbReference>
<dbReference type="HAMAP" id="MF_01104">
    <property type="entry name" value="Syd"/>
    <property type="match status" value="1"/>
</dbReference>
<dbReference type="InterPro" id="IPR009948">
    <property type="entry name" value="Syd"/>
</dbReference>
<dbReference type="InterPro" id="IPR038228">
    <property type="entry name" value="Syd_sf"/>
</dbReference>
<dbReference type="NCBIfam" id="NF003439">
    <property type="entry name" value="PRK04968.1"/>
    <property type="match status" value="1"/>
</dbReference>
<dbReference type="Pfam" id="PF07348">
    <property type="entry name" value="Syd"/>
    <property type="match status" value="1"/>
</dbReference>
<reference key="1">
    <citation type="journal article" date="2005" name="Nucleic Acids Res.">
        <title>Genome dynamics and diversity of Shigella species, the etiologic agents of bacillary dysentery.</title>
        <authorList>
            <person name="Yang F."/>
            <person name="Yang J."/>
            <person name="Zhang X."/>
            <person name="Chen L."/>
            <person name="Jiang Y."/>
            <person name="Yan Y."/>
            <person name="Tang X."/>
            <person name="Wang J."/>
            <person name="Xiong Z."/>
            <person name="Dong J."/>
            <person name="Xue Y."/>
            <person name="Zhu Y."/>
            <person name="Xu X."/>
            <person name="Sun L."/>
            <person name="Chen S."/>
            <person name="Nie H."/>
            <person name="Peng J."/>
            <person name="Xu J."/>
            <person name="Wang Y."/>
            <person name="Yuan Z."/>
            <person name="Wen Y."/>
            <person name="Yao Z."/>
            <person name="Shen Y."/>
            <person name="Qiang B."/>
            <person name="Hou Y."/>
            <person name="Yu J."/>
            <person name="Jin Q."/>
        </authorList>
    </citation>
    <scope>NUCLEOTIDE SEQUENCE [LARGE SCALE GENOMIC DNA]</scope>
    <source>
        <strain>Sb227</strain>
    </source>
</reference>
<name>SYDP_SHIBS</name>
<sequence>MDDLTAQALKDFTARYCDAWHEEHKSWPLSEELYGVPSPCIISTTEDAVYWQPQPFTGEQNVNAVERAFDIVIQPTIHTFYTTQFAGDMHAQFGDIKLTLLQTWSEDDFRRVQENLIGHLVTQKRLKLPPTLFIATLEEELEVISVCNLSGEVCKETLGTRKRTHLASNLAEFLNQLKPLL</sequence>